<organism>
    <name type="scientific">Phenylobacterium zucineum (strain HLK1)</name>
    <dbReference type="NCBI Taxonomy" id="450851"/>
    <lineage>
        <taxon>Bacteria</taxon>
        <taxon>Pseudomonadati</taxon>
        <taxon>Pseudomonadota</taxon>
        <taxon>Alphaproteobacteria</taxon>
        <taxon>Caulobacterales</taxon>
        <taxon>Caulobacteraceae</taxon>
        <taxon>Phenylobacterium</taxon>
    </lineage>
</organism>
<gene>
    <name evidence="1" type="primary">accA</name>
    <name type="ordered locus">PHZ_c0748</name>
</gene>
<sequence>MAAHYLEFERPIADLEAKIEELSRLSETASPGAFDGEIESLRARAQDMRREAYANLDAWQKTQVARHPDRPHFVDYVAALIEDFQELRGDRKFADDQAIMGGLGRFRGMPVVVMGHEKGRDTVTRVKHNFGYARPEGYRKAIRLMELAERFNLPVVSFVDTAGAYPGVASEERGVAEAIARSTEKCLMLETPNVAVITGEGGSGGAIAIAATSRVLILEHAIYSVIAPEGANSILWRGARTAGEAAKAMKITAQDLERMKIVDRIIREPAGGAHSDPEAAMQAVGDAVEEELKALLALDAATLKAQRAERFYAIGRSGLQ</sequence>
<comment type="function">
    <text evidence="1">Component of the acetyl coenzyme A carboxylase (ACC) complex. First, biotin carboxylase catalyzes the carboxylation of biotin on its carrier protein (BCCP) and then the CO(2) group is transferred by the carboxyltransferase to acetyl-CoA to form malonyl-CoA.</text>
</comment>
<comment type="catalytic activity">
    <reaction evidence="1">
        <text>N(6)-carboxybiotinyl-L-lysyl-[protein] + acetyl-CoA = N(6)-biotinyl-L-lysyl-[protein] + malonyl-CoA</text>
        <dbReference type="Rhea" id="RHEA:54728"/>
        <dbReference type="Rhea" id="RHEA-COMP:10505"/>
        <dbReference type="Rhea" id="RHEA-COMP:10506"/>
        <dbReference type="ChEBI" id="CHEBI:57288"/>
        <dbReference type="ChEBI" id="CHEBI:57384"/>
        <dbReference type="ChEBI" id="CHEBI:83144"/>
        <dbReference type="ChEBI" id="CHEBI:83145"/>
        <dbReference type="EC" id="2.1.3.15"/>
    </reaction>
</comment>
<comment type="pathway">
    <text evidence="1">Lipid metabolism; malonyl-CoA biosynthesis; malonyl-CoA from acetyl-CoA: step 1/1.</text>
</comment>
<comment type="subunit">
    <text evidence="1">Acetyl-CoA carboxylase is a heterohexamer composed of biotin carboxyl carrier protein (AccB), biotin carboxylase (AccC) and two subunits each of ACCase subunit alpha (AccA) and ACCase subunit beta (AccD).</text>
</comment>
<comment type="subcellular location">
    <subcellularLocation>
        <location evidence="1">Cytoplasm</location>
    </subcellularLocation>
</comment>
<comment type="similarity">
    <text evidence="1">Belongs to the AccA family.</text>
</comment>
<keyword id="KW-0067">ATP-binding</keyword>
<keyword id="KW-0963">Cytoplasm</keyword>
<keyword id="KW-0275">Fatty acid biosynthesis</keyword>
<keyword id="KW-0276">Fatty acid metabolism</keyword>
<keyword id="KW-0444">Lipid biosynthesis</keyword>
<keyword id="KW-0443">Lipid metabolism</keyword>
<keyword id="KW-0547">Nucleotide-binding</keyword>
<keyword id="KW-1185">Reference proteome</keyword>
<keyword id="KW-0808">Transferase</keyword>
<proteinExistence type="inferred from homology"/>
<reference key="1">
    <citation type="journal article" date="2008" name="BMC Genomics">
        <title>Complete genome of Phenylobacterium zucineum - a novel facultative intracellular bacterium isolated from human erythroleukemia cell line K562.</title>
        <authorList>
            <person name="Luo Y."/>
            <person name="Xu X."/>
            <person name="Ding Z."/>
            <person name="Liu Z."/>
            <person name="Zhang B."/>
            <person name="Yan Z."/>
            <person name="Sun J."/>
            <person name="Hu S."/>
            <person name="Hu X."/>
        </authorList>
    </citation>
    <scope>NUCLEOTIDE SEQUENCE [LARGE SCALE GENOMIC DNA]</scope>
    <source>
        <strain>HLK1</strain>
    </source>
</reference>
<accession>B4RG38</accession>
<protein>
    <recommendedName>
        <fullName evidence="1">Acetyl-coenzyme A carboxylase carboxyl transferase subunit alpha</fullName>
        <shortName evidence="1">ACCase subunit alpha</shortName>
        <shortName evidence="1">Acetyl-CoA carboxylase carboxyltransferase subunit alpha</shortName>
        <ecNumber evidence="1">2.1.3.15</ecNumber>
    </recommendedName>
</protein>
<feature type="chain" id="PRO_1000134504" description="Acetyl-coenzyme A carboxylase carboxyl transferase subunit alpha">
    <location>
        <begin position="1"/>
        <end position="320"/>
    </location>
</feature>
<feature type="domain" description="CoA carboxyltransferase C-terminal" evidence="2">
    <location>
        <begin position="33"/>
        <end position="294"/>
    </location>
</feature>
<name>ACCA_PHEZH</name>
<dbReference type="EC" id="2.1.3.15" evidence="1"/>
<dbReference type="EMBL" id="CP000747">
    <property type="protein sequence ID" value="ACG77162.1"/>
    <property type="molecule type" value="Genomic_DNA"/>
</dbReference>
<dbReference type="RefSeq" id="WP_012521310.1">
    <property type="nucleotide sequence ID" value="NC_011144.1"/>
</dbReference>
<dbReference type="SMR" id="B4RG38"/>
<dbReference type="STRING" id="450851.PHZ_c0748"/>
<dbReference type="KEGG" id="pzu:PHZ_c0748"/>
<dbReference type="eggNOG" id="COG0825">
    <property type="taxonomic scope" value="Bacteria"/>
</dbReference>
<dbReference type="HOGENOM" id="CLU_015486_0_2_5"/>
<dbReference type="OrthoDB" id="9808023at2"/>
<dbReference type="UniPathway" id="UPA00655">
    <property type="reaction ID" value="UER00711"/>
</dbReference>
<dbReference type="Proteomes" id="UP000001868">
    <property type="component" value="Chromosome"/>
</dbReference>
<dbReference type="GO" id="GO:0009317">
    <property type="term" value="C:acetyl-CoA carboxylase complex"/>
    <property type="evidence" value="ECO:0007669"/>
    <property type="project" value="InterPro"/>
</dbReference>
<dbReference type="GO" id="GO:0003989">
    <property type="term" value="F:acetyl-CoA carboxylase activity"/>
    <property type="evidence" value="ECO:0007669"/>
    <property type="project" value="InterPro"/>
</dbReference>
<dbReference type="GO" id="GO:0005524">
    <property type="term" value="F:ATP binding"/>
    <property type="evidence" value="ECO:0007669"/>
    <property type="project" value="UniProtKB-KW"/>
</dbReference>
<dbReference type="GO" id="GO:0016743">
    <property type="term" value="F:carboxyl- or carbamoyltransferase activity"/>
    <property type="evidence" value="ECO:0007669"/>
    <property type="project" value="UniProtKB-UniRule"/>
</dbReference>
<dbReference type="GO" id="GO:0006633">
    <property type="term" value="P:fatty acid biosynthetic process"/>
    <property type="evidence" value="ECO:0007669"/>
    <property type="project" value="UniProtKB-KW"/>
</dbReference>
<dbReference type="GO" id="GO:2001295">
    <property type="term" value="P:malonyl-CoA biosynthetic process"/>
    <property type="evidence" value="ECO:0007669"/>
    <property type="project" value="UniProtKB-UniRule"/>
</dbReference>
<dbReference type="Gene3D" id="3.90.226.10">
    <property type="entry name" value="2-enoyl-CoA Hydratase, Chain A, domain 1"/>
    <property type="match status" value="1"/>
</dbReference>
<dbReference type="HAMAP" id="MF_00823">
    <property type="entry name" value="AcetylCoA_CT_alpha"/>
    <property type="match status" value="1"/>
</dbReference>
<dbReference type="InterPro" id="IPR001095">
    <property type="entry name" value="Acetyl_CoA_COase_a_su"/>
</dbReference>
<dbReference type="InterPro" id="IPR029045">
    <property type="entry name" value="ClpP/crotonase-like_dom_sf"/>
</dbReference>
<dbReference type="InterPro" id="IPR011763">
    <property type="entry name" value="COA_CT_C"/>
</dbReference>
<dbReference type="NCBIfam" id="TIGR00513">
    <property type="entry name" value="accA"/>
    <property type="match status" value="1"/>
</dbReference>
<dbReference type="NCBIfam" id="NF041504">
    <property type="entry name" value="AccA_sub"/>
    <property type="match status" value="1"/>
</dbReference>
<dbReference type="NCBIfam" id="NF004344">
    <property type="entry name" value="PRK05724.1"/>
    <property type="match status" value="1"/>
</dbReference>
<dbReference type="PANTHER" id="PTHR42853">
    <property type="entry name" value="ACETYL-COENZYME A CARBOXYLASE CARBOXYL TRANSFERASE SUBUNIT ALPHA"/>
    <property type="match status" value="1"/>
</dbReference>
<dbReference type="PANTHER" id="PTHR42853:SF3">
    <property type="entry name" value="ACETYL-COENZYME A CARBOXYLASE CARBOXYL TRANSFERASE SUBUNIT ALPHA, CHLOROPLASTIC"/>
    <property type="match status" value="1"/>
</dbReference>
<dbReference type="Pfam" id="PF03255">
    <property type="entry name" value="ACCA"/>
    <property type="match status" value="1"/>
</dbReference>
<dbReference type="PRINTS" id="PR01069">
    <property type="entry name" value="ACCCTRFRASEA"/>
</dbReference>
<dbReference type="SUPFAM" id="SSF52096">
    <property type="entry name" value="ClpP/crotonase"/>
    <property type="match status" value="1"/>
</dbReference>
<dbReference type="PROSITE" id="PS50989">
    <property type="entry name" value="COA_CT_CTER"/>
    <property type="match status" value="1"/>
</dbReference>
<evidence type="ECO:0000255" key="1">
    <source>
        <dbReference type="HAMAP-Rule" id="MF_00823"/>
    </source>
</evidence>
<evidence type="ECO:0000255" key="2">
    <source>
        <dbReference type="PROSITE-ProRule" id="PRU01137"/>
    </source>
</evidence>